<accession>Q8PMK9</accession>
<keyword id="KW-0133">Cell shape</keyword>
<keyword id="KW-0961">Cell wall biogenesis/degradation</keyword>
<keyword id="KW-0460">Magnesium</keyword>
<keyword id="KW-0479">Metal-binding</keyword>
<keyword id="KW-0573">Peptidoglycan synthesis</keyword>
<keyword id="KW-0808">Transferase</keyword>
<organism>
    <name type="scientific">Xanthomonas axonopodis pv. citri (strain 306)</name>
    <dbReference type="NCBI Taxonomy" id="190486"/>
    <lineage>
        <taxon>Bacteria</taxon>
        <taxon>Pseudomonadati</taxon>
        <taxon>Pseudomonadota</taxon>
        <taxon>Gammaproteobacteria</taxon>
        <taxon>Lysobacterales</taxon>
        <taxon>Lysobacteraceae</taxon>
        <taxon>Xanthomonas</taxon>
    </lineage>
</organism>
<sequence>MASPAMHPVLSAAVPRHIAIIMDGNGRWAQRRRRPRVIGHRAGARAVNRTIDFCLEKGVSALTLFAFSSENWGRPQDEVDALMKLFLHALDREVEELQRRGVQVRFIGDRSRFAAPLRDRMAGAERSTAANSRLVLSIAASYGGRQDIASAARALAEDVAAGRLQPEQIDEALLSSRVALADLPAPDLFIRTGGDTRISNFLLWQLAYTELWFTETLWPEFDAGVLQQALDDYAGRERRFGLTSAQIADKATESSSA</sequence>
<reference key="1">
    <citation type="journal article" date="2002" name="Nature">
        <title>Comparison of the genomes of two Xanthomonas pathogens with differing host specificities.</title>
        <authorList>
            <person name="da Silva A.C.R."/>
            <person name="Ferro J.A."/>
            <person name="Reinach F.C."/>
            <person name="Farah C.S."/>
            <person name="Furlan L.R."/>
            <person name="Quaggio R.B."/>
            <person name="Monteiro-Vitorello C.B."/>
            <person name="Van Sluys M.A."/>
            <person name="Almeida N.F. Jr."/>
            <person name="Alves L.M.C."/>
            <person name="do Amaral A.M."/>
            <person name="Bertolini M.C."/>
            <person name="Camargo L.E.A."/>
            <person name="Camarotte G."/>
            <person name="Cannavan F."/>
            <person name="Cardozo J."/>
            <person name="Chambergo F."/>
            <person name="Ciapina L.P."/>
            <person name="Cicarelli R.M.B."/>
            <person name="Coutinho L.L."/>
            <person name="Cursino-Santos J.R."/>
            <person name="El-Dorry H."/>
            <person name="Faria J.B."/>
            <person name="Ferreira A.J.S."/>
            <person name="Ferreira R.C.C."/>
            <person name="Ferro M.I.T."/>
            <person name="Formighieri E.F."/>
            <person name="Franco M.C."/>
            <person name="Greggio C.C."/>
            <person name="Gruber A."/>
            <person name="Katsuyama A.M."/>
            <person name="Kishi L.T."/>
            <person name="Leite R.P."/>
            <person name="Lemos E.G.M."/>
            <person name="Lemos M.V.F."/>
            <person name="Locali E.C."/>
            <person name="Machado M.A."/>
            <person name="Madeira A.M.B.N."/>
            <person name="Martinez-Rossi N.M."/>
            <person name="Martins E.C."/>
            <person name="Meidanis J."/>
            <person name="Menck C.F.M."/>
            <person name="Miyaki C.Y."/>
            <person name="Moon D.H."/>
            <person name="Moreira L.M."/>
            <person name="Novo M.T.M."/>
            <person name="Okura V.K."/>
            <person name="Oliveira M.C."/>
            <person name="Oliveira V.R."/>
            <person name="Pereira H.A."/>
            <person name="Rossi A."/>
            <person name="Sena J.A.D."/>
            <person name="Silva C."/>
            <person name="de Souza R.F."/>
            <person name="Spinola L.A.F."/>
            <person name="Takita M.A."/>
            <person name="Tamura R.E."/>
            <person name="Teixeira E.C."/>
            <person name="Tezza R.I.D."/>
            <person name="Trindade dos Santos M."/>
            <person name="Truffi D."/>
            <person name="Tsai S.M."/>
            <person name="White F.F."/>
            <person name="Setubal J.C."/>
            <person name="Kitajima J.P."/>
        </authorList>
    </citation>
    <scope>NUCLEOTIDE SEQUENCE [LARGE SCALE GENOMIC DNA]</scope>
    <source>
        <strain>306</strain>
    </source>
</reference>
<name>UPPS_XANAC</name>
<feature type="chain" id="PRO_0000123718" description="Ditrans,polycis-undecaprenyl-diphosphate synthase ((2E,6E)-farnesyl-diphosphate specific)">
    <location>
        <begin position="1"/>
        <end position="257"/>
    </location>
</feature>
<feature type="active site" evidence="1">
    <location>
        <position position="23"/>
    </location>
</feature>
<feature type="active site" description="Proton acceptor" evidence="1">
    <location>
        <position position="71"/>
    </location>
</feature>
<feature type="binding site" evidence="1">
    <location>
        <position position="23"/>
    </location>
    <ligand>
        <name>Mg(2+)</name>
        <dbReference type="ChEBI" id="CHEBI:18420"/>
    </ligand>
</feature>
<feature type="binding site" evidence="1">
    <location>
        <begin position="24"/>
        <end position="27"/>
    </location>
    <ligand>
        <name>substrate</name>
    </ligand>
</feature>
<feature type="binding site" evidence="1">
    <location>
        <position position="28"/>
    </location>
    <ligand>
        <name>substrate</name>
    </ligand>
</feature>
<feature type="binding site" evidence="1">
    <location>
        <position position="36"/>
    </location>
    <ligand>
        <name>substrate</name>
    </ligand>
</feature>
<feature type="binding site" evidence="1">
    <location>
        <position position="40"/>
    </location>
    <ligand>
        <name>substrate</name>
    </ligand>
</feature>
<feature type="binding site" evidence="1">
    <location>
        <begin position="68"/>
        <end position="70"/>
    </location>
    <ligand>
        <name>substrate</name>
    </ligand>
</feature>
<feature type="binding site" evidence="1">
    <location>
        <position position="72"/>
    </location>
    <ligand>
        <name>substrate</name>
    </ligand>
</feature>
<feature type="binding site" evidence="1">
    <location>
        <position position="74"/>
    </location>
    <ligand>
        <name>substrate</name>
    </ligand>
</feature>
<feature type="binding site" evidence="1">
    <location>
        <position position="191"/>
    </location>
    <ligand>
        <name>substrate</name>
    </ligand>
</feature>
<feature type="binding site" evidence="1">
    <location>
        <begin position="197"/>
        <end position="199"/>
    </location>
    <ligand>
        <name>substrate</name>
    </ligand>
</feature>
<feature type="binding site" evidence="1">
    <location>
        <position position="210"/>
    </location>
    <ligand>
        <name>Mg(2+)</name>
        <dbReference type="ChEBI" id="CHEBI:18420"/>
    </ligand>
</feature>
<dbReference type="EC" id="2.5.1.31" evidence="1"/>
<dbReference type="EMBL" id="AE008923">
    <property type="protein sequence ID" value="AAM36288.1"/>
    <property type="molecule type" value="Genomic_DNA"/>
</dbReference>
<dbReference type="SMR" id="Q8PMK9"/>
<dbReference type="KEGG" id="xac:XAC1417"/>
<dbReference type="eggNOG" id="COG0020">
    <property type="taxonomic scope" value="Bacteria"/>
</dbReference>
<dbReference type="HOGENOM" id="CLU_038505_1_1_6"/>
<dbReference type="Proteomes" id="UP000000576">
    <property type="component" value="Chromosome"/>
</dbReference>
<dbReference type="GO" id="GO:0005829">
    <property type="term" value="C:cytosol"/>
    <property type="evidence" value="ECO:0007669"/>
    <property type="project" value="TreeGrafter"/>
</dbReference>
<dbReference type="GO" id="GO:0008834">
    <property type="term" value="F:ditrans,polycis-undecaprenyl-diphosphate synthase [(2E,6E)-farnesyl-diphosphate specific] activity"/>
    <property type="evidence" value="ECO:0007669"/>
    <property type="project" value="UniProtKB-UniRule"/>
</dbReference>
<dbReference type="GO" id="GO:0000287">
    <property type="term" value="F:magnesium ion binding"/>
    <property type="evidence" value="ECO:0007669"/>
    <property type="project" value="UniProtKB-UniRule"/>
</dbReference>
<dbReference type="GO" id="GO:0071555">
    <property type="term" value="P:cell wall organization"/>
    <property type="evidence" value="ECO:0007669"/>
    <property type="project" value="UniProtKB-KW"/>
</dbReference>
<dbReference type="GO" id="GO:0009252">
    <property type="term" value="P:peptidoglycan biosynthetic process"/>
    <property type="evidence" value="ECO:0007669"/>
    <property type="project" value="UniProtKB-UniRule"/>
</dbReference>
<dbReference type="GO" id="GO:0016094">
    <property type="term" value="P:polyprenol biosynthetic process"/>
    <property type="evidence" value="ECO:0007669"/>
    <property type="project" value="TreeGrafter"/>
</dbReference>
<dbReference type="GO" id="GO:0008360">
    <property type="term" value="P:regulation of cell shape"/>
    <property type="evidence" value="ECO:0007669"/>
    <property type="project" value="UniProtKB-KW"/>
</dbReference>
<dbReference type="CDD" id="cd00475">
    <property type="entry name" value="Cis_IPPS"/>
    <property type="match status" value="1"/>
</dbReference>
<dbReference type="FunFam" id="3.40.1180.10:FF:000001">
    <property type="entry name" value="(2E,6E)-farnesyl-diphosphate-specific ditrans,polycis-undecaprenyl-diphosphate synthase"/>
    <property type="match status" value="1"/>
</dbReference>
<dbReference type="Gene3D" id="3.40.1180.10">
    <property type="entry name" value="Decaprenyl diphosphate synthase-like"/>
    <property type="match status" value="1"/>
</dbReference>
<dbReference type="HAMAP" id="MF_01139">
    <property type="entry name" value="ISPT"/>
    <property type="match status" value="1"/>
</dbReference>
<dbReference type="InterPro" id="IPR001441">
    <property type="entry name" value="UPP_synth-like"/>
</dbReference>
<dbReference type="InterPro" id="IPR018520">
    <property type="entry name" value="UPP_synth-like_CS"/>
</dbReference>
<dbReference type="InterPro" id="IPR036424">
    <property type="entry name" value="UPP_synth-like_sf"/>
</dbReference>
<dbReference type="NCBIfam" id="TIGR00055">
    <property type="entry name" value="uppS"/>
    <property type="match status" value="1"/>
</dbReference>
<dbReference type="PANTHER" id="PTHR10291:SF0">
    <property type="entry name" value="DEHYDRODOLICHYL DIPHOSPHATE SYNTHASE 2"/>
    <property type="match status" value="1"/>
</dbReference>
<dbReference type="PANTHER" id="PTHR10291">
    <property type="entry name" value="DEHYDRODOLICHYL DIPHOSPHATE SYNTHASE FAMILY MEMBER"/>
    <property type="match status" value="1"/>
</dbReference>
<dbReference type="Pfam" id="PF01255">
    <property type="entry name" value="Prenyltransf"/>
    <property type="match status" value="1"/>
</dbReference>
<dbReference type="SUPFAM" id="SSF64005">
    <property type="entry name" value="Undecaprenyl diphosphate synthase"/>
    <property type="match status" value="1"/>
</dbReference>
<dbReference type="PROSITE" id="PS01066">
    <property type="entry name" value="UPP_SYNTHASE"/>
    <property type="match status" value="1"/>
</dbReference>
<gene>
    <name evidence="1" type="primary">uppS</name>
    <name type="ordered locus">XAC1417</name>
</gene>
<protein>
    <recommendedName>
        <fullName evidence="1">Ditrans,polycis-undecaprenyl-diphosphate synthase ((2E,6E)-farnesyl-diphosphate specific)</fullName>
        <ecNumber evidence="1">2.5.1.31</ecNumber>
    </recommendedName>
    <alternativeName>
        <fullName evidence="1">Ditrans,polycis-undecaprenylcistransferase</fullName>
    </alternativeName>
    <alternativeName>
        <fullName evidence="1">Undecaprenyl diphosphate synthase</fullName>
        <shortName evidence="1">UDS</shortName>
    </alternativeName>
    <alternativeName>
        <fullName evidence="1">Undecaprenyl pyrophosphate synthase</fullName>
        <shortName evidence="1">UPP synthase</shortName>
    </alternativeName>
</protein>
<proteinExistence type="inferred from homology"/>
<evidence type="ECO:0000255" key="1">
    <source>
        <dbReference type="HAMAP-Rule" id="MF_01139"/>
    </source>
</evidence>
<comment type="function">
    <text evidence="1">Catalyzes the sequential condensation of isopentenyl diphosphate (IPP) with (2E,6E)-farnesyl diphosphate (E,E-FPP) to yield (2Z,6Z,10Z,14Z,18Z,22Z,26Z,30Z,34E,38E)-undecaprenyl diphosphate (di-trans,octa-cis-UPP). UPP is the precursor of glycosyl carrier lipid in the biosynthesis of bacterial cell wall polysaccharide components such as peptidoglycan and lipopolysaccharide.</text>
</comment>
<comment type="catalytic activity">
    <reaction evidence="1">
        <text>8 isopentenyl diphosphate + (2E,6E)-farnesyl diphosphate = di-trans,octa-cis-undecaprenyl diphosphate + 8 diphosphate</text>
        <dbReference type="Rhea" id="RHEA:27551"/>
        <dbReference type="ChEBI" id="CHEBI:33019"/>
        <dbReference type="ChEBI" id="CHEBI:58405"/>
        <dbReference type="ChEBI" id="CHEBI:128769"/>
        <dbReference type="ChEBI" id="CHEBI:175763"/>
        <dbReference type="EC" id="2.5.1.31"/>
    </reaction>
</comment>
<comment type="cofactor">
    <cofactor evidence="1">
        <name>Mg(2+)</name>
        <dbReference type="ChEBI" id="CHEBI:18420"/>
    </cofactor>
    <text evidence="1">Binds 2 magnesium ions per subunit.</text>
</comment>
<comment type="subunit">
    <text evidence="1">Homodimer.</text>
</comment>
<comment type="similarity">
    <text evidence="1">Belongs to the UPP synthase family.</text>
</comment>